<name>B2J_SICPA</name>
<dbReference type="EC" id="4.6.1.-" evidence="4"/>
<dbReference type="EMBL" id="FJ171505">
    <property type="protein sequence ID" value="ACN49001.1"/>
    <property type="molecule type" value="mRNA"/>
</dbReference>
<dbReference type="SMR" id="C0JB70"/>
<dbReference type="GO" id="GO:0005576">
    <property type="term" value="C:extracellular region"/>
    <property type="evidence" value="ECO:0007669"/>
    <property type="project" value="UniProtKB-SubCell"/>
</dbReference>
<dbReference type="GO" id="GO:0016829">
    <property type="term" value="F:lyase activity"/>
    <property type="evidence" value="ECO:0007669"/>
    <property type="project" value="UniProtKB-KW"/>
</dbReference>
<dbReference type="GO" id="GO:0046872">
    <property type="term" value="F:metal ion binding"/>
    <property type="evidence" value="ECO:0007669"/>
    <property type="project" value="UniProtKB-KW"/>
</dbReference>
<dbReference type="GO" id="GO:0008081">
    <property type="term" value="F:phosphoric diester hydrolase activity"/>
    <property type="evidence" value="ECO:0007669"/>
    <property type="project" value="InterPro"/>
</dbReference>
<dbReference type="GO" id="GO:0090729">
    <property type="term" value="F:toxin activity"/>
    <property type="evidence" value="ECO:0007669"/>
    <property type="project" value="UniProtKB-KW"/>
</dbReference>
<dbReference type="GO" id="GO:0031640">
    <property type="term" value="P:killing of cells of another organism"/>
    <property type="evidence" value="ECO:0007669"/>
    <property type="project" value="UniProtKB-KW"/>
</dbReference>
<dbReference type="GO" id="GO:0016042">
    <property type="term" value="P:lipid catabolic process"/>
    <property type="evidence" value="ECO:0007669"/>
    <property type="project" value="UniProtKB-KW"/>
</dbReference>
<dbReference type="CDD" id="cd08576">
    <property type="entry name" value="GDPD_like_SMaseD_PLD"/>
    <property type="match status" value="1"/>
</dbReference>
<dbReference type="Gene3D" id="3.20.20.190">
    <property type="entry name" value="Phosphatidylinositol (PI) phosphodiesterase"/>
    <property type="match status" value="1"/>
</dbReference>
<dbReference type="InterPro" id="IPR017946">
    <property type="entry name" value="PLC-like_Pdiesterase_TIM-brl"/>
</dbReference>
<dbReference type="SUPFAM" id="SSF51695">
    <property type="entry name" value="PLC-like phosphodiesterases"/>
    <property type="match status" value="1"/>
</dbReference>
<accession>C0JB70</accession>
<sequence length="275" mass="31730">WIMGHMVNAIEQVDEFLNLGANAIEFDIDFDENGIAKYTHHGIPCDCGRLCTKSAVFTEYLDYVRQVTSPGDPKFRKELVLLALDLKLQRISSEKAYAAGVDVATKLLDHYWKRGWNGGRAYILLNIPLVEDYEFIKGFKDTLRKEGHEQYNAKVGINFTGNEDLDEIRKVLEKLGEDEHIWQADGITSCFPRGTDRLEKALEKRDTPGYKYISKVYAWTLVRSSIMRRSLRLDVDGVMSNYPDRVVGVLQEKEFANKFRLATYADNPWEKFMRI</sequence>
<comment type="function">
    <text evidence="1 3">Dermonecrotic toxins cleave the phosphodiester linkage between the phosphate and headgroup of certain phospholipids (sphingolipid and lysolipid substrates), forming an alcohol (often choline) and a cyclic phosphate (By similarity). This toxin acts on sphingomyelin (SM) (By similarity). It may also act on ceramide phosphoethanolamine (CPE), lysophosphatidylcholine (LPC) and lysophosphatidylethanolamine (LPE), but not on lysophosphatidylserine (LPS), and lysophosphatidylglycerol (LPG) (By similarity). It acts by transphosphatidylation, releasing exclusively cyclic phosphate products as second products (By similarity). Induces dermonecrosis, hemolysis, increased vascular permeability, edema, inflammatory response, and platelet aggregation (By similarity).</text>
</comment>
<comment type="catalytic activity">
    <reaction evidence="1">
        <text>an N-(acyl)-sphingosylphosphocholine = an N-(acyl)-sphingosyl-1,3-cyclic phosphate + choline</text>
        <dbReference type="Rhea" id="RHEA:60652"/>
        <dbReference type="ChEBI" id="CHEBI:15354"/>
        <dbReference type="ChEBI" id="CHEBI:64583"/>
        <dbReference type="ChEBI" id="CHEBI:143892"/>
    </reaction>
</comment>
<comment type="catalytic activity">
    <reaction evidence="1">
        <text>an N-(acyl)-sphingosylphosphoethanolamine = an N-(acyl)-sphingosyl-1,3-cyclic phosphate + ethanolamine</text>
        <dbReference type="Rhea" id="RHEA:60648"/>
        <dbReference type="ChEBI" id="CHEBI:57603"/>
        <dbReference type="ChEBI" id="CHEBI:143891"/>
        <dbReference type="ChEBI" id="CHEBI:143892"/>
    </reaction>
</comment>
<comment type="catalytic activity">
    <reaction evidence="1">
        <text>a 1-acyl-sn-glycero-3-phosphocholine = a 1-acyl-sn-glycero-2,3-cyclic phosphate + choline</text>
        <dbReference type="Rhea" id="RHEA:60700"/>
        <dbReference type="ChEBI" id="CHEBI:15354"/>
        <dbReference type="ChEBI" id="CHEBI:58168"/>
        <dbReference type="ChEBI" id="CHEBI:143947"/>
    </reaction>
</comment>
<comment type="catalytic activity">
    <reaction evidence="1">
        <text>a 1-acyl-sn-glycero-3-phosphoethanolamine = a 1-acyl-sn-glycero-2,3-cyclic phosphate + ethanolamine</text>
        <dbReference type="Rhea" id="RHEA:60704"/>
        <dbReference type="ChEBI" id="CHEBI:57603"/>
        <dbReference type="ChEBI" id="CHEBI:64381"/>
        <dbReference type="ChEBI" id="CHEBI:143947"/>
    </reaction>
</comment>
<comment type="cofactor">
    <cofactor evidence="5">
        <name>Mg(2+)</name>
        <dbReference type="ChEBI" id="CHEBI:18420"/>
    </cofactor>
    <text evidence="5">Binds 1 Mg(2+) ion per subunit.</text>
</comment>
<comment type="subcellular location">
    <subcellularLocation>
        <location evidence="8">Secreted</location>
    </subcellularLocation>
</comment>
<comment type="tissue specificity">
    <text evidence="8">Expressed by the venom gland.</text>
</comment>
<comment type="similarity">
    <text evidence="7">Belongs to the arthropod phospholipase D family. Class II subfamily.</text>
</comment>
<comment type="caution">
    <text evidence="1 2 4">The most common activity assay for dermonecrotic toxins detects enzymatic activity by monitoring choline release from substrate. Liberation of choline from sphingomyelin (SM) or lysophosphatidylcholine (LPC) is commonly assumed to result from substrate hydrolysis, giving either ceramide-1-phosphate (C1P) or lysophosphatidic acid (LPA), respectively, as a second product. However, two studies from Lajoie and colleagues (2013 and 2015) report the observation of exclusive formation of cyclic phosphate products as second products, resulting from intramolecular transphosphatidylation. Cyclic phosphates have vastly different biological properties from their monoester counterparts, and they may be relevant to the pathology of brown spider envenomation.</text>
</comment>
<proteinExistence type="evidence at transcript level"/>
<organism>
    <name type="scientific">Sicarius patagonicus</name>
    <name type="common">Six-eyed sand spider</name>
    <dbReference type="NCBI Taxonomy" id="571540"/>
    <lineage>
        <taxon>Eukaryota</taxon>
        <taxon>Metazoa</taxon>
        <taxon>Ecdysozoa</taxon>
        <taxon>Arthropoda</taxon>
        <taxon>Chelicerata</taxon>
        <taxon>Arachnida</taxon>
        <taxon>Araneae</taxon>
        <taxon>Araneomorphae</taxon>
        <taxon>Haplogynae</taxon>
        <taxon>Scytodoidea</taxon>
        <taxon>Sicariidae</taxon>
        <taxon>Sicarius</taxon>
    </lineage>
</organism>
<feature type="chain" id="PRO_0000392881" description="Dermonecrotic toxin SpaSicTox-betaIIA3">
    <location>
        <begin position="1" status="less than"/>
        <end position="275"/>
    </location>
</feature>
<feature type="active site" evidence="5">
    <location>
        <position position="5"/>
    </location>
</feature>
<feature type="active site" description="Nucleophile" evidence="5">
    <location>
        <position position="41"/>
    </location>
</feature>
<feature type="binding site" evidence="5">
    <location>
        <position position="25"/>
    </location>
    <ligand>
        <name>Mg(2+)</name>
        <dbReference type="ChEBI" id="CHEBI:18420"/>
    </ligand>
</feature>
<feature type="binding site" evidence="5">
    <location>
        <position position="27"/>
    </location>
    <ligand>
        <name>Mg(2+)</name>
        <dbReference type="ChEBI" id="CHEBI:18420"/>
    </ligand>
</feature>
<feature type="binding site" evidence="5">
    <location>
        <position position="85"/>
    </location>
    <ligand>
        <name>Mg(2+)</name>
        <dbReference type="ChEBI" id="CHEBI:18420"/>
    </ligand>
</feature>
<feature type="disulfide bond" evidence="3">
    <location>
        <begin position="45"/>
        <end position="51"/>
    </location>
</feature>
<feature type="disulfide bond" evidence="3">
    <location>
        <begin position="47"/>
        <end position="190"/>
    </location>
</feature>
<feature type="non-terminal residue">
    <location>
        <position position="1"/>
    </location>
</feature>
<protein>
    <recommendedName>
        <fullName evidence="6">Dermonecrotic toxin SpaSicTox-betaIIA3</fullName>
        <ecNumber evidence="4">4.6.1.-</ecNumber>
    </recommendedName>
    <alternativeName>
        <fullName>Phospholipase D</fullName>
        <shortName>PLD</shortName>
    </alternativeName>
    <alternativeName>
        <fullName>Sphingomyelin phosphodiesterase D</fullName>
        <shortName>SMD</shortName>
        <shortName>SMase D</shortName>
        <shortName>Sphingomyelinase D</shortName>
    </alternativeName>
</protein>
<evidence type="ECO:0000250" key="1">
    <source>
        <dbReference type="UniProtKB" id="A0A0D4WTV1"/>
    </source>
</evidence>
<evidence type="ECO:0000250" key="2">
    <source>
        <dbReference type="UniProtKB" id="A0A0D4WV12"/>
    </source>
</evidence>
<evidence type="ECO:0000250" key="3">
    <source>
        <dbReference type="UniProtKB" id="P0CE80"/>
    </source>
</evidence>
<evidence type="ECO:0000250" key="4">
    <source>
        <dbReference type="UniProtKB" id="Q4ZFU2"/>
    </source>
</evidence>
<evidence type="ECO:0000250" key="5">
    <source>
        <dbReference type="UniProtKB" id="Q8I914"/>
    </source>
</evidence>
<evidence type="ECO:0000303" key="6">
    <source>
    </source>
</evidence>
<evidence type="ECO:0000305" key="7"/>
<evidence type="ECO:0000305" key="8">
    <source>
    </source>
</evidence>
<keyword id="KW-0204">Cytolysis</keyword>
<keyword id="KW-1061">Dermonecrotic toxin</keyword>
<keyword id="KW-1015">Disulfide bond</keyword>
<keyword id="KW-0354">Hemolysis</keyword>
<keyword id="KW-0442">Lipid degradation</keyword>
<keyword id="KW-0443">Lipid metabolism</keyword>
<keyword id="KW-0456">Lyase</keyword>
<keyword id="KW-0460">Magnesium</keyword>
<keyword id="KW-0479">Metal-binding</keyword>
<keyword id="KW-0964">Secreted</keyword>
<keyword id="KW-0800">Toxin</keyword>
<reference key="1">
    <citation type="journal article" date="2009" name="Mol. Biol. Evol.">
        <title>Molecular evolution, functional variation, and proposed nomenclature of the gene family that includes sphingomyelinase D in sicariid spider venoms.</title>
        <authorList>
            <person name="Binford G.J."/>
            <person name="Bodner M.R."/>
            <person name="Cordes M.H."/>
            <person name="Baldwin K.L."/>
            <person name="Rynerson M.R."/>
            <person name="Burns S.N."/>
            <person name="Zobel-Thropp P.A."/>
        </authorList>
    </citation>
    <scope>NUCLEOTIDE SEQUENCE [MRNA]</scope>
    <scope>NOMENCLATURE</scope>
    <source>
        <tissue>Venom gland</tissue>
    </source>
</reference>